<feature type="chain" id="PRO_0000176643" description="Large ribosomal subunit protein bL9">
    <location>
        <begin position="1"/>
        <end position="149"/>
    </location>
</feature>
<dbReference type="EMBL" id="AE001439">
    <property type="protein sequence ID" value="AAD06044.1"/>
    <property type="molecule type" value="Genomic_DNA"/>
</dbReference>
<dbReference type="PIR" id="D71929">
    <property type="entry name" value="D71929"/>
</dbReference>
<dbReference type="RefSeq" id="WP_000866289.1">
    <property type="nucleotide sequence ID" value="NZ_CP011330.1"/>
</dbReference>
<dbReference type="SMR" id="Q9ZLW3"/>
<dbReference type="KEGG" id="hpj:jhp_0463"/>
<dbReference type="PATRIC" id="fig|85963.30.peg.539"/>
<dbReference type="eggNOG" id="COG0359">
    <property type="taxonomic scope" value="Bacteria"/>
</dbReference>
<dbReference type="Proteomes" id="UP000000804">
    <property type="component" value="Chromosome"/>
</dbReference>
<dbReference type="GO" id="GO:1990904">
    <property type="term" value="C:ribonucleoprotein complex"/>
    <property type="evidence" value="ECO:0007669"/>
    <property type="project" value="UniProtKB-KW"/>
</dbReference>
<dbReference type="GO" id="GO:0005840">
    <property type="term" value="C:ribosome"/>
    <property type="evidence" value="ECO:0007669"/>
    <property type="project" value="UniProtKB-KW"/>
</dbReference>
<dbReference type="GO" id="GO:0019843">
    <property type="term" value="F:rRNA binding"/>
    <property type="evidence" value="ECO:0007669"/>
    <property type="project" value="UniProtKB-UniRule"/>
</dbReference>
<dbReference type="GO" id="GO:0003735">
    <property type="term" value="F:structural constituent of ribosome"/>
    <property type="evidence" value="ECO:0007669"/>
    <property type="project" value="InterPro"/>
</dbReference>
<dbReference type="GO" id="GO:0006412">
    <property type="term" value="P:translation"/>
    <property type="evidence" value="ECO:0007669"/>
    <property type="project" value="UniProtKB-UniRule"/>
</dbReference>
<dbReference type="FunFam" id="3.10.430.100:FF:000003">
    <property type="entry name" value="50S ribosomal protein L9"/>
    <property type="match status" value="1"/>
</dbReference>
<dbReference type="FunFam" id="3.40.5.10:FF:000002">
    <property type="entry name" value="50S ribosomal protein L9"/>
    <property type="match status" value="1"/>
</dbReference>
<dbReference type="Gene3D" id="3.10.430.100">
    <property type="entry name" value="Ribosomal protein L9, C-terminal domain"/>
    <property type="match status" value="1"/>
</dbReference>
<dbReference type="Gene3D" id="3.40.5.10">
    <property type="entry name" value="Ribosomal protein L9, N-terminal domain"/>
    <property type="match status" value="1"/>
</dbReference>
<dbReference type="HAMAP" id="MF_00503">
    <property type="entry name" value="Ribosomal_bL9"/>
    <property type="match status" value="1"/>
</dbReference>
<dbReference type="InterPro" id="IPR000244">
    <property type="entry name" value="Ribosomal_bL9"/>
</dbReference>
<dbReference type="InterPro" id="IPR009027">
    <property type="entry name" value="Ribosomal_bL9/RNase_H1_N"/>
</dbReference>
<dbReference type="InterPro" id="IPR020594">
    <property type="entry name" value="Ribosomal_bL9_bac/chp"/>
</dbReference>
<dbReference type="InterPro" id="IPR020069">
    <property type="entry name" value="Ribosomal_bL9_C"/>
</dbReference>
<dbReference type="InterPro" id="IPR036791">
    <property type="entry name" value="Ribosomal_bL9_C_sf"/>
</dbReference>
<dbReference type="InterPro" id="IPR020070">
    <property type="entry name" value="Ribosomal_bL9_N"/>
</dbReference>
<dbReference type="InterPro" id="IPR036935">
    <property type="entry name" value="Ribosomal_bL9_N_sf"/>
</dbReference>
<dbReference type="NCBIfam" id="TIGR00158">
    <property type="entry name" value="L9"/>
    <property type="match status" value="1"/>
</dbReference>
<dbReference type="PANTHER" id="PTHR21368">
    <property type="entry name" value="50S RIBOSOMAL PROTEIN L9"/>
    <property type="match status" value="1"/>
</dbReference>
<dbReference type="Pfam" id="PF03948">
    <property type="entry name" value="Ribosomal_L9_C"/>
    <property type="match status" value="1"/>
</dbReference>
<dbReference type="Pfam" id="PF01281">
    <property type="entry name" value="Ribosomal_L9_N"/>
    <property type="match status" value="1"/>
</dbReference>
<dbReference type="SUPFAM" id="SSF55658">
    <property type="entry name" value="L9 N-domain-like"/>
    <property type="match status" value="1"/>
</dbReference>
<dbReference type="SUPFAM" id="SSF55653">
    <property type="entry name" value="Ribosomal protein L9 C-domain"/>
    <property type="match status" value="1"/>
</dbReference>
<dbReference type="PROSITE" id="PS00651">
    <property type="entry name" value="RIBOSOMAL_L9"/>
    <property type="match status" value="1"/>
</dbReference>
<evidence type="ECO:0000255" key="1">
    <source>
        <dbReference type="HAMAP-Rule" id="MF_00503"/>
    </source>
</evidence>
<evidence type="ECO:0000305" key="2"/>
<accession>Q9ZLW3</accession>
<name>RL9_HELPJ</name>
<gene>
    <name evidence="1" type="primary">rplI</name>
    <name type="ordered locus">jhp_0463</name>
</gene>
<organism>
    <name type="scientific">Helicobacter pylori (strain J99 / ATCC 700824)</name>
    <name type="common">Campylobacter pylori J99</name>
    <dbReference type="NCBI Taxonomy" id="85963"/>
    <lineage>
        <taxon>Bacteria</taxon>
        <taxon>Pseudomonadati</taxon>
        <taxon>Campylobacterota</taxon>
        <taxon>Epsilonproteobacteria</taxon>
        <taxon>Campylobacterales</taxon>
        <taxon>Helicobacteraceae</taxon>
        <taxon>Helicobacter</taxon>
    </lineage>
</organism>
<proteinExistence type="inferred from homology"/>
<reference key="1">
    <citation type="journal article" date="1999" name="Nature">
        <title>Genomic sequence comparison of two unrelated isolates of the human gastric pathogen Helicobacter pylori.</title>
        <authorList>
            <person name="Alm R.A."/>
            <person name="Ling L.-S.L."/>
            <person name="Moir D.T."/>
            <person name="King B.L."/>
            <person name="Brown E.D."/>
            <person name="Doig P.C."/>
            <person name="Smith D.R."/>
            <person name="Noonan B."/>
            <person name="Guild B.C."/>
            <person name="deJonge B.L."/>
            <person name="Carmel G."/>
            <person name="Tummino P.J."/>
            <person name="Caruso A."/>
            <person name="Uria-Nickelsen M."/>
            <person name="Mills D.M."/>
            <person name="Ives C."/>
            <person name="Gibson R."/>
            <person name="Merberg D."/>
            <person name="Mills S.D."/>
            <person name="Jiang Q."/>
            <person name="Taylor D.E."/>
            <person name="Vovis G.F."/>
            <person name="Trust T.J."/>
        </authorList>
    </citation>
    <scope>NUCLEOTIDE SEQUENCE [LARGE SCALE GENOMIC DNA]</scope>
    <source>
        <strain>J99 / ATCC 700824</strain>
    </source>
</reference>
<keyword id="KW-0687">Ribonucleoprotein</keyword>
<keyword id="KW-0689">Ribosomal protein</keyword>
<keyword id="KW-0694">RNA-binding</keyword>
<keyword id="KW-0699">rRNA-binding</keyword>
<protein>
    <recommendedName>
        <fullName evidence="1">Large ribosomal subunit protein bL9</fullName>
    </recommendedName>
    <alternativeName>
        <fullName evidence="2">50S ribosomal protein L9</fullName>
    </alternativeName>
</protein>
<comment type="function">
    <text evidence="1">Binds to the 23S rRNA.</text>
</comment>
<comment type="similarity">
    <text evidence="1">Belongs to the bacterial ribosomal protein bL9 family.</text>
</comment>
<sequence>MKVLLLEDVKNLGKAGEVCEVKDGYGNNFLIANQKAKLATNEVINKYKAEVKKKAEKEALEKAQKLQMVETLQTITLTIHKKVGANGSLFGAITKEEITERLKEQHASLNLDKKDIELKHPIKSTGIYEIEVKLGSGIAGVFKIDVVAE</sequence>